<organism>
    <name type="scientific">Bacillus anthracis (strain CDC 684 / NRRL 3495)</name>
    <dbReference type="NCBI Taxonomy" id="568206"/>
    <lineage>
        <taxon>Bacteria</taxon>
        <taxon>Bacillati</taxon>
        <taxon>Bacillota</taxon>
        <taxon>Bacilli</taxon>
        <taxon>Bacillales</taxon>
        <taxon>Bacillaceae</taxon>
        <taxon>Bacillus</taxon>
        <taxon>Bacillus cereus group</taxon>
    </lineage>
</organism>
<feature type="chain" id="PRO_1000124180" description="Glycerol kinase">
    <location>
        <begin position="1"/>
        <end position="496"/>
    </location>
</feature>
<feature type="binding site" evidence="1">
    <location>
        <position position="12"/>
    </location>
    <ligand>
        <name>ADP</name>
        <dbReference type="ChEBI" id="CHEBI:456216"/>
    </ligand>
</feature>
<feature type="binding site" evidence="1">
    <location>
        <position position="12"/>
    </location>
    <ligand>
        <name>ATP</name>
        <dbReference type="ChEBI" id="CHEBI:30616"/>
    </ligand>
</feature>
<feature type="binding site" evidence="1">
    <location>
        <position position="12"/>
    </location>
    <ligand>
        <name>sn-glycerol 3-phosphate</name>
        <dbReference type="ChEBI" id="CHEBI:57597"/>
    </ligand>
</feature>
<feature type="binding site" evidence="1">
    <location>
        <position position="13"/>
    </location>
    <ligand>
        <name>ATP</name>
        <dbReference type="ChEBI" id="CHEBI:30616"/>
    </ligand>
</feature>
<feature type="binding site" evidence="1">
    <location>
        <position position="14"/>
    </location>
    <ligand>
        <name>ATP</name>
        <dbReference type="ChEBI" id="CHEBI:30616"/>
    </ligand>
</feature>
<feature type="binding site" evidence="1">
    <location>
        <position position="16"/>
    </location>
    <ligand>
        <name>ADP</name>
        <dbReference type="ChEBI" id="CHEBI:456216"/>
    </ligand>
</feature>
<feature type="binding site" evidence="1">
    <location>
        <position position="82"/>
    </location>
    <ligand>
        <name>glycerol</name>
        <dbReference type="ChEBI" id="CHEBI:17754"/>
    </ligand>
</feature>
<feature type="binding site" evidence="1">
    <location>
        <position position="82"/>
    </location>
    <ligand>
        <name>sn-glycerol 3-phosphate</name>
        <dbReference type="ChEBI" id="CHEBI:57597"/>
    </ligand>
</feature>
<feature type="binding site" evidence="1">
    <location>
        <position position="83"/>
    </location>
    <ligand>
        <name>glycerol</name>
        <dbReference type="ChEBI" id="CHEBI:17754"/>
    </ligand>
</feature>
<feature type="binding site" evidence="1">
    <location>
        <position position="83"/>
    </location>
    <ligand>
        <name>sn-glycerol 3-phosphate</name>
        <dbReference type="ChEBI" id="CHEBI:57597"/>
    </ligand>
</feature>
<feature type="binding site" evidence="1">
    <location>
        <position position="134"/>
    </location>
    <ligand>
        <name>glycerol</name>
        <dbReference type="ChEBI" id="CHEBI:17754"/>
    </ligand>
</feature>
<feature type="binding site" evidence="1">
    <location>
        <position position="134"/>
    </location>
    <ligand>
        <name>sn-glycerol 3-phosphate</name>
        <dbReference type="ChEBI" id="CHEBI:57597"/>
    </ligand>
</feature>
<feature type="binding site" evidence="1">
    <location>
        <position position="244"/>
    </location>
    <ligand>
        <name>glycerol</name>
        <dbReference type="ChEBI" id="CHEBI:17754"/>
    </ligand>
</feature>
<feature type="binding site" evidence="1">
    <location>
        <position position="244"/>
    </location>
    <ligand>
        <name>sn-glycerol 3-phosphate</name>
        <dbReference type="ChEBI" id="CHEBI:57597"/>
    </ligand>
</feature>
<feature type="binding site" evidence="1">
    <location>
        <position position="245"/>
    </location>
    <ligand>
        <name>glycerol</name>
        <dbReference type="ChEBI" id="CHEBI:17754"/>
    </ligand>
</feature>
<feature type="binding site" evidence="1">
    <location>
        <position position="266"/>
    </location>
    <ligand>
        <name>ADP</name>
        <dbReference type="ChEBI" id="CHEBI:456216"/>
    </ligand>
</feature>
<feature type="binding site" evidence="1">
    <location>
        <position position="266"/>
    </location>
    <ligand>
        <name>ATP</name>
        <dbReference type="ChEBI" id="CHEBI:30616"/>
    </ligand>
</feature>
<feature type="binding site" evidence="1">
    <location>
        <position position="309"/>
    </location>
    <ligand>
        <name>ADP</name>
        <dbReference type="ChEBI" id="CHEBI:456216"/>
    </ligand>
</feature>
<feature type="binding site" evidence="1">
    <location>
        <position position="309"/>
    </location>
    <ligand>
        <name>ATP</name>
        <dbReference type="ChEBI" id="CHEBI:30616"/>
    </ligand>
</feature>
<feature type="binding site" evidence="1">
    <location>
        <position position="313"/>
    </location>
    <ligand>
        <name>ATP</name>
        <dbReference type="ChEBI" id="CHEBI:30616"/>
    </ligand>
</feature>
<feature type="binding site" evidence="1">
    <location>
        <position position="410"/>
    </location>
    <ligand>
        <name>ADP</name>
        <dbReference type="ChEBI" id="CHEBI:456216"/>
    </ligand>
</feature>
<feature type="binding site" evidence="1">
    <location>
        <position position="410"/>
    </location>
    <ligand>
        <name>ATP</name>
        <dbReference type="ChEBI" id="CHEBI:30616"/>
    </ligand>
</feature>
<feature type="binding site" evidence="1">
    <location>
        <position position="414"/>
    </location>
    <ligand>
        <name>ADP</name>
        <dbReference type="ChEBI" id="CHEBI:456216"/>
    </ligand>
</feature>
<feature type="modified residue" description="Phosphohistidine; by HPr" evidence="1">
    <location>
        <position position="230"/>
    </location>
</feature>
<keyword id="KW-0067">ATP-binding</keyword>
<keyword id="KW-0319">Glycerol metabolism</keyword>
<keyword id="KW-0418">Kinase</keyword>
<keyword id="KW-0547">Nucleotide-binding</keyword>
<keyword id="KW-0597">Phosphoprotein</keyword>
<keyword id="KW-0808">Transferase</keyword>
<comment type="function">
    <text evidence="1">Key enzyme in the regulation of glycerol uptake and metabolism. Catalyzes the phosphorylation of glycerol to yield sn-glycerol 3-phosphate.</text>
</comment>
<comment type="catalytic activity">
    <reaction evidence="1">
        <text>glycerol + ATP = sn-glycerol 3-phosphate + ADP + H(+)</text>
        <dbReference type="Rhea" id="RHEA:21644"/>
        <dbReference type="ChEBI" id="CHEBI:15378"/>
        <dbReference type="ChEBI" id="CHEBI:17754"/>
        <dbReference type="ChEBI" id="CHEBI:30616"/>
        <dbReference type="ChEBI" id="CHEBI:57597"/>
        <dbReference type="ChEBI" id="CHEBI:456216"/>
        <dbReference type="EC" id="2.7.1.30"/>
    </reaction>
</comment>
<comment type="activity regulation">
    <text evidence="1">Activated by phosphorylation and inhibited by fructose 1,6-bisphosphate (FBP).</text>
</comment>
<comment type="pathway">
    <text evidence="1">Polyol metabolism; glycerol degradation via glycerol kinase pathway; sn-glycerol 3-phosphate from glycerol: step 1/1.</text>
</comment>
<comment type="subunit">
    <text evidence="1">Homotetramer and homodimer (in equilibrium).</text>
</comment>
<comment type="PTM">
    <text evidence="1">The phosphoenolpyruvate-dependent sugar phosphotransferase system (PTS), including enzyme I, and histidine-containing protein (HPr) are required for the phosphorylation, which leads to the activation of the enzyme.</text>
</comment>
<comment type="similarity">
    <text evidence="1">Belongs to the FGGY kinase family.</text>
</comment>
<dbReference type="EC" id="2.7.1.30" evidence="1"/>
<dbReference type="EMBL" id="CP001215">
    <property type="protein sequence ID" value="ACP15909.1"/>
    <property type="molecule type" value="Genomic_DNA"/>
</dbReference>
<dbReference type="RefSeq" id="WP_000759995.1">
    <property type="nucleotide sequence ID" value="NC_012581.1"/>
</dbReference>
<dbReference type="SMR" id="C3LCY4"/>
<dbReference type="KEGG" id="bah:BAMEG_3544"/>
<dbReference type="HOGENOM" id="CLU_009281_2_3_9"/>
<dbReference type="UniPathway" id="UPA00618">
    <property type="reaction ID" value="UER00672"/>
</dbReference>
<dbReference type="GO" id="GO:0005829">
    <property type="term" value="C:cytosol"/>
    <property type="evidence" value="ECO:0007669"/>
    <property type="project" value="TreeGrafter"/>
</dbReference>
<dbReference type="GO" id="GO:0005524">
    <property type="term" value="F:ATP binding"/>
    <property type="evidence" value="ECO:0007669"/>
    <property type="project" value="UniProtKB-UniRule"/>
</dbReference>
<dbReference type="GO" id="GO:0004370">
    <property type="term" value="F:glycerol kinase activity"/>
    <property type="evidence" value="ECO:0000250"/>
    <property type="project" value="UniProtKB"/>
</dbReference>
<dbReference type="GO" id="GO:0019563">
    <property type="term" value="P:glycerol catabolic process"/>
    <property type="evidence" value="ECO:0007669"/>
    <property type="project" value="UniProtKB-UniRule"/>
</dbReference>
<dbReference type="GO" id="GO:0006071">
    <property type="term" value="P:glycerol metabolic process"/>
    <property type="evidence" value="ECO:0000250"/>
    <property type="project" value="UniProtKB"/>
</dbReference>
<dbReference type="GO" id="GO:0006072">
    <property type="term" value="P:glycerol-3-phosphate metabolic process"/>
    <property type="evidence" value="ECO:0007669"/>
    <property type="project" value="InterPro"/>
</dbReference>
<dbReference type="CDD" id="cd07786">
    <property type="entry name" value="FGGY_EcGK_like"/>
    <property type="match status" value="1"/>
</dbReference>
<dbReference type="FunFam" id="3.30.420.40:FF:000007">
    <property type="entry name" value="Glycerol kinase"/>
    <property type="match status" value="1"/>
</dbReference>
<dbReference type="FunFam" id="3.30.420.40:FF:000008">
    <property type="entry name" value="Glycerol kinase"/>
    <property type="match status" value="1"/>
</dbReference>
<dbReference type="Gene3D" id="3.30.420.40">
    <property type="match status" value="2"/>
</dbReference>
<dbReference type="HAMAP" id="MF_00186">
    <property type="entry name" value="Glycerol_kin"/>
    <property type="match status" value="1"/>
</dbReference>
<dbReference type="InterPro" id="IPR043129">
    <property type="entry name" value="ATPase_NBD"/>
</dbReference>
<dbReference type="InterPro" id="IPR000577">
    <property type="entry name" value="Carb_kinase_FGGY"/>
</dbReference>
<dbReference type="InterPro" id="IPR018483">
    <property type="entry name" value="Carb_kinase_FGGY_CS"/>
</dbReference>
<dbReference type="InterPro" id="IPR018485">
    <property type="entry name" value="FGGY_C"/>
</dbReference>
<dbReference type="InterPro" id="IPR018484">
    <property type="entry name" value="FGGY_N"/>
</dbReference>
<dbReference type="InterPro" id="IPR005999">
    <property type="entry name" value="Glycerol_kin"/>
</dbReference>
<dbReference type="NCBIfam" id="TIGR01311">
    <property type="entry name" value="glycerol_kin"/>
    <property type="match status" value="1"/>
</dbReference>
<dbReference type="NCBIfam" id="NF000756">
    <property type="entry name" value="PRK00047.1"/>
    <property type="match status" value="1"/>
</dbReference>
<dbReference type="PANTHER" id="PTHR10196:SF69">
    <property type="entry name" value="GLYCEROL KINASE"/>
    <property type="match status" value="1"/>
</dbReference>
<dbReference type="PANTHER" id="PTHR10196">
    <property type="entry name" value="SUGAR KINASE"/>
    <property type="match status" value="1"/>
</dbReference>
<dbReference type="Pfam" id="PF02782">
    <property type="entry name" value="FGGY_C"/>
    <property type="match status" value="1"/>
</dbReference>
<dbReference type="Pfam" id="PF00370">
    <property type="entry name" value="FGGY_N"/>
    <property type="match status" value="1"/>
</dbReference>
<dbReference type="PIRSF" id="PIRSF000538">
    <property type="entry name" value="GlpK"/>
    <property type="match status" value="1"/>
</dbReference>
<dbReference type="SUPFAM" id="SSF53067">
    <property type="entry name" value="Actin-like ATPase domain"/>
    <property type="match status" value="2"/>
</dbReference>
<dbReference type="PROSITE" id="PS00933">
    <property type="entry name" value="FGGY_KINASES_1"/>
    <property type="match status" value="1"/>
</dbReference>
<dbReference type="PROSITE" id="PS00445">
    <property type="entry name" value="FGGY_KINASES_2"/>
    <property type="match status" value="1"/>
</dbReference>
<sequence length="496" mass="55044">MKKYILSLDQGTTSSRAILFNKKGEIVHSAQKEFTQHFPKPGWVEHNAQEIWGSILAVIATCLSEADVKPEQIAGIGITNQRETAVVWDKTTGKPIYNAIVWQSRQTAEICDELKEKGYSEMVREKTGLLIDAYFSGTKVKWILDNVEGAREKAENGDLLFGTIDTWLVWKLSGGKAHVTDYSNASRTLMFNIHDLQWDDELLDMLTVPKSMLPEVRPSSEVYGETIDYHFFGQNVPIAGVAGDQQAALFGQACFGEGMAKNTYGTGCFMLMNTGEKAVASEHGLLTTIAWGIDGKVNYALEGSIFVAGSAIQWLRDGMRMFKDASESEVYASRVESTDGVYVVPAFVGLGTPYWDSEVRGAMFGVTRGTTKEHFIRATLESLAYQTKDVLCAMEADSGIELKTLRVDGGAVKNNFLMKFQSDILDVPVERPVINETTALGAAYLAGLAVGYWKNQDEIKEQWHMDKRFEPTMEAETSEELYAGWKKAIEATKAFK</sequence>
<accession>C3LCY4</accession>
<proteinExistence type="inferred from homology"/>
<name>GLPK_BACAC</name>
<evidence type="ECO:0000255" key="1">
    <source>
        <dbReference type="HAMAP-Rule" id="MF_00186"/>
    </source>
</evidence>
<reference key="1">
    <citation type="submission" date="2008-10" db="EMBL/GenBank/DDBJ databases">
        <title>Genome sequence of Bacillus anthracis str. CDC 684.</title>
        <authorList>
            <person name="Dodson R.J."/>
            <person name="Munk A.C."/>
            <person name="Brettin T."/>
            <person name="Bruce D."/>
            <person name="Detter C."/>
            <person name="Tapia R."/>
            <person name="Han C."/>
            <person name="Sutton G."/>
            <person name="Sims D."/>
        </authorList>
    </citation>
    <scope>NUCLEOTIDE SEQUENCE [LARGE SCALE GENOMIC DNA]</scope>
    <source>
        <strain>CDC 684 / NRRL 3495</strain>
    </source>
</reference>
<protein>
    <recommendedName>
        <fullName evidence="1">Glycerol kinase</fullName>
        <ecNumber evidence="1">2.7.1.30</ecNumber>
    </recommendedName>
    <alternativeName>
        <fullName evidence="1">ATP:glycerol 3-phosphotransferase</fullName>
    </alternativeName>
    <alternativeName>
        <fullName evidence="1">Glycerokinase</fullName>
        <shortName evidence="1">GK</shortName>
    </alternativeName>
</protein>
<gene>
    <name evidence="1" type="primary">glpK</name>
    <name type="ordered locus">BAMEG_3544</name>
</gene>